<organism>
    <name type="scientific">Photorhabdus laumondii subsp. laumondii (strain DSM 15139 / CIP 105565 / TT01)</name>
    <name type="common">Photorhabdus luminescens subsp. laumondii</name>
    <dbReference type="NCBI Taxonomy" id="243265"/>
    <lineage>
        <taxon>Bacteria</taxon>
        <taxon>Pseudomonadati</taxon>
        <taxon>Pseudomonadota</taxon>
        <taxon>Gammaproteobacteria</taxon>
        <taxon>Enterobacterales</taxon>
        <taxon>Morganellaceae</taxon>
        <taxon>Photorhabdus</taxon>
    </lineage>
</organism>
<sequence>MNSTVSMTVIGAGSYGTSLAITLARNGHNVVLWGHNPEHVGALQRVRCNQKFLPDVSFPDSLLLETDLIKALTASRDILVVVPSHVFGEVLKQIKPHLRPDSRIVWATKGLEADTGRLLQDVAREILGNEIPLAVLSGPTFAKELAAGLPTAIAISATESAFGDGLQQLFHCGKSFRVYKNPDFIGVQLGGAVKNVIAIGAGISDGMGFGANARTALITRGLAEMSRLGAALGADPSTFMGMAGLGDLVLTCTDNQSRNRRFGMMLGQGISVEEAQYQIGQVVEGYRNTKEVRALANRANVEMPIAEQIYQILYCNKNVIEAAQALLGRARKDESDNVRS</sequence>
<comment type="function">
    <text evidence="1">Catalyzes the reduction of the glycolytic intermediate dihydroxyacetone phosphate (DHAP) to sn-glycerol 3-phosphate (G3P), the key precursor for phospholipid synthesis.</text>
</comment>
<comment type="catalytic activity">
    <reaction evidence="1">
        <text>sn-glycerol 3-phosphate + NAD(+) = dihydroxyacetone phosphate + NADH + H(+)</text>
        <dbReference type="Rhea" id="RHEA:11092"/>
        <dbReference type="ChEBI" id="CHEBI:15378"/>
        <dbReference type="ChEBI" id="CHEBI:57540"/>
        <dbReference type="ChEBI" id="CHEBI:57597"/>
        <dbReference type="ChEBI" id="CHEBI:57642"/>
        <dbReference type="ChEBI" id="CHEBI:57945"/>
        <dbReference type="EC" id="1.1.1.94"/>
    </reaction>
    <physiologicalReaction direction="right-to-left" evidence="1">
        <dbReference type="Rhea" id="RHEA:11094"/>
    </physiologicalReaction>
</comment>
<comment type="catalytic activity">
    <reaction evidence="1">
        <text>sn-glycerol 3-phosphate + NADP(+) = dihydroxyacetone phosphate + NADPH + H(+)</text>
        <dbReference type="Rhea" id="RHEA:11096"/>
        <dbReference type="ChEBI" id="CHEBI:15378"/>
        <dbReference type="ChEBI" id="CHEBI:57597"/>
        <dbReference type="ChEBI" id="CHEBI:57642"/>
        <dbReference type="ChEBI" id="CHEBI:57783"/>
        <dbReference type="ChEBI" id="CHEBI:58349"/>
        <dbReference type="EC" id="1.1.1.94"/>
    </reaction>
    <physiologicalReaction direction="right-to-left" evidence="1">
        <dbReference type="Rhea" id="RHEA:11098"/>
    </physiologicalReaction>
</comment>
<comment type="pathway">
    <text evidence="1">Membrane lipid metabolism; glycerophospholipid metabolism.</text>
</comment>
<comment type="subcellular location">
    <subcellularLocation>
        <location evidence="1">Cytoplasm</location>
    </subcellularLocation>
</comment>
<comment type="similarity">
    <text evidence="1">Belongs to the NAD-dependent glycerol-3-phosphate dehydrogenase family.</text>
</comment>
<reference key="1">
    <citation type="journal article" date="2003" name="Nat. Biotechnol.">
        <title>The genome sequence of the entomopathogenic bacterium Photorhabdus luminescens.</title>
        <authorList>
            <person name="Duchaud E."/>
            <person name="Rusniok C."/>
            <person name="Frangeul L."/>
            <person name="Buchrieser C."/>
            <person name="Givaudan A."/>
            <person name="Taourit S."/>
            <person name="Bocs S."/>
            <person name="Boursaux-Eude C."/>
            <person name="Chandler M."/>
            <person name="Charles J.-F."/>
            <person name="Dassa E."/>
            <person name="Derose R."/>
            <person name="Derzelle S."/>
            <person name="Freyssinet G."/>
            <person name="Gaudriault S."/>
            <person name="Medigue C."/>
            <person name="Lanois A."/>
            <person name="Powell K."/>
            <person name="Siguier P."/>
            <person name="Vincent R."/>
            <person name="Wingate V."/>
            <person name="Zouine M."/>
            <person name="Glaser P."/>
            <person name="Boemare N."/>
            <person name="Danchin A."/>
            <person name="Kunst F."/>
        </authorList>
    </citation>
    <scope>NUCLEOTIDE SEQUENCE [LARGE SCALE GENOMIC DNA]</scope>
    <source>
        <strain>DSM 15139 / CIP 105565 / TT01</strain>
    </source>
</reference>
<proteinExistence type="inferred from homology"/>
<dbReference type="EC" id="1.1.1.94" evidence="1"/>
<dbReference type="EMBL" id="BX571875">
    <property type="protein sequence ID" value="CAE17210.1"/>
    <property type="molecule type" value="Genomic_DNA"/>
</dbReference>
<dbReference type="RefSeq" id="WP_011148897.1">
    <property type="nucleotide sequence ID" value="NC_005126.1"/>
</dbReference>
<dbReference type="SMR" id="Q7MY54"/>
<dbReference type="STRING" id="243265.plu4838"/>
<dbReference type="GeneID" id="48851066"/>
<dbReference type="KEGG" id="plu:plu4838"/>
<dbReference type="eggNOG" id="COG0240">
    <property type="taxonomic scope" value="Bacteria"/>
</dbReference>
<dbReference type="HOGENOM" id="CLU_033449_0_2_6"/>
<dbReference type="OrthoDB" id="9812273at2"/>
<dbReference type="UniPathway" id="UPA00940"/>
<dbReference type="Proteomes" id="UP000002514">
    <property type="component" value="Chromosome"/>
</dbReference>
<dbReference type="GO" id="GO:0005829">
    <property type="term" value="C:cytosol"/>
    <property type="evidence" value="ECO:0007669"/>
    <property type="project" value="TreeGrafter"/>
</dbReference>
<dbReference type="GO" id="GO:0047952">
    <property type="term" value="F:glycerol-3-phosphate dehydrogenase [NAD(P)+] activity"/>
    <property type="evidence" value="ECO:0007669"/>
    <property type="project" value="UniProtKB-UniRule"/>
</dbReference>
<dbReference type="GO" id="GO:0051287">
    <property type="term" value="F:NAD binding"/>
    <property type="evidence" value="ECO:0007669"/>
    <property type="project" value="InterPro"/>
</dbReference>
<dbReference type="GO" id="GO:0005975">
    <property type="term" value="P:carbohydrate metabolic process"/>
    <property type="evidence" value="ECO:0007669"/>
    <property type="project" value="InterPro"/>
</dbReference>
<dbReference type="GO" id="GO:0046167">
    <property type="term" value="P:glycerol-3-phosphate biosynthetic process"/>
    <property type="evidence" value="ECO:0007669"/>
    <property type="project" value="UniProtKB-UniRule"/>
</dbReference>
<dbReference type="GO" id="GO:0046168">
    <property type="term" value="P:glycerol-3-phosphate catabolic process"/>
    <property type="evidence" value="ECO:0007669"/>
    <property type="project" value="InterPro"/>
</dbReference>
<dbReference type="GO" id="GO:0046474">
    <property type="term" value="P:glycerophospholipid biosynthetic process"/>
    <property type="evidence" value="ECO:0007669"/>
    <property type="project" value="TreeGrafter"/>
</dbReference>
<dbReference type="FunFam" id="1.10.1040.10:FF:000001">
    <property type="entry name" value="Glycerol-3-phosphate dehydrogenase [NAD(P)+]"/>
    <property type="match status" value="1"/>
</dbReference>
<dbReference type="FunFam" id="3.40.50.720:FF:000019">
    <property type="entry name" value="Glycerol-3-phosphate dehydrogenase [NAD(P)+]"/>
    <property type="match status" value="1"/>
</dbReference>
<dbReference type="Gene3D" id="1.10.1040.10">
    <property type="entry name" value="N-(1-d-carboxylethyl)-l-norvaline Dehydrogenase, domain 2"/>
    <property type="match status" value="1"/>
</dbReference>
<dbReference type="Gene3D" id="3.40.50.720">
    <property type="entry name" value="NAD(P)-binding Rossmann-like Domain"/>
    <property type="match status" value="1"/>
</dbReference>
<dbReference type="HAMAP" id="MF_00394">
    <property type="entry name" value="NAD_Glyc3P_dehydrog"/>
    <property type="match status" value="1"/>
</dbReference>
<dbReference type="InterPro" id="IPR008927">
    <property type="entry name" value="6-PGluconate_DH-like_C_sf"/>
</dbReference>
<dbReference type="InterPro" id="IPR013328">
    <property type="entry name" value="6PGD_dom2"/>
</dbReference>
<dbReference type="InterPro" id="IPR006168">
    <property type="entry name" value="G3P_DH_NAD-dep"/>
</dbReference>
<dbReference type="InterPro" id="IPR006109">
    <property type="entry name" value="G3P_DH_NAD-dep_C"/>
</dbReference>
<dbReference type="InterPro" id="IPR011128">
    <property type="entry name" value="G3P_DH_NAD-dep_N"/>
</dbReference>
<dbReference type="InterPro" id="IPR036291">
    <property type="entry name" value="NAD(P)-bd_dom_sf"/>
</dbReference>
<dbReference type="NCBIfam" id="NF000939">
    <property type="entry name" value="PRK00094.1-1"/>
    <property type="match status" value="1"/>
</dbReference>
<dbReference type="NCBIfam" id="NF000940">
    <property type="entry name" value="PRK00094.1-2"/>
    <property type="match status" value="1"/>
</dbReference>
<dbReference type="NCBIfam" id="NF000942">
    <property type="entry name" value="PRK00094.1-4"/>
    <property type="match status" value="1"/>
</dbReference>
<dbReference type="PANTHER" id="PTHR11728">
    <property type="entry name" value="GLYCEROL-3-PHOSPHATE DEHYDROGENASE"/>
    <property type="match status" value="1"/>
</dbReference>
<dbReference type="PANTHER" id="PTHR11728:SF1">
    <property type="entry name" value="GLYCEROL-3-PHOSPHATE DEHYDROGENASE [NAD(+)] 2, CHLOROPLASTIC"/>
    <property type="match status" value="1"/>
</dbReference>
<dbReference type="Pfam" id="PF07479">
    <property type="entry name" value="NAD_Gly3P_dh_C"/>
    <property type="match status" value="1"/>
</dbReference>
<dbReference type="Pfam" id="PF01210">
    <property type="entry name" value="NAD_Gly3P_dh_N"/>
    <property type="match status" value="1"/>
</dbReference>
<dbReference type="PIRSF" id="PIRSF000114">
    <property type="entry name" value="Glycerol-3-P_dh"/>
    <property type="match status" value="1"/>
</dbReference>
<dbReference type="PRINTS" id="PR00077">
    <property type="entry name" value="GPDHDRGNASE"/>
</dbReference>
<dbReference type="SUPFAM" id="SSF48179">
    <property type="entry name" value="6-phosphogluconate dehydrogenase C-terminal domain-like"/>
    <property type="match status" value="1"/>
</dbReference>
<dbReference type="SUPFAM" id="SSF51735">
    <property type="entry name" value="NAD(P)-binding Rossmann-fold domains"/>
    <property type="match status" value="1"/>
</dbReference>
<dbReference type="PROSITE" id="PS00957">
    <property type="entry name" value="NAD_G3PDH"/>
    <property type="match status" value="1"/>
</dbReference>
<feature type="chain" id="PRO_0000138006" description="Glycerol-3-phosphate dehydrogenase [NAD(P)+]">
    <location>
        <begin position="1"/>
        <end position="340"/>
    </location>
</feature>
<feature type="active site" description="Proton acceptor" evidence="1">
    <location>
        <position position="194"/>
    </location>
</feature>
<feature type="binding site" evidence="1">
    <location>
        <position position="14"/>
    </location>
    <ligand>
        <name>NADPH</name>
        <dbReference type="ChEBI" id="CHEBI:57783"/>
    </ligand>
</feature>
<feature type="binding site" evidence="1">
    <location>
        <position position="15"/>
    </location>
    <ligand>
        <name>NADPH</name>
        <dbReference type="ChEBI" id="CHEBI:57783"/>
    </ligand>
</feature>
<feature type="binding site" evidence="1">
    <location>
        <position position="35"/>
    </location>
    <ligand>
        <name>NADPH</name>
        <dbReference type="ChEBI" id="CHEBI:57783"/>
    </ligand>
</feature>
<feature type="binding site" evidence="1">
    <location>
        <position position="109"/>
    </location>
    <ligand>
        <name>NADPH</name>
        <dbReference type="ChEBI" id="CHEBI:57783"/>
    </ligand>
</feature>
<feature type="binding site" evidence="1">
    <location>
        <position position="109"/>
    </location>
    <ligand>
        <name>sn-glycerol 3-phosphate</name>
        <dbReference type="ChEBI" id="CHEBI:57597"/>
    </ligand>
</feature>
<feature type="binding site" evidence="1">
    <location>
        <position position="138"/>
    </location>
    <ligand>
        <name>sn-glycerol 3-phosphate</name>
        <dbReference type="ChEBI" id="CHEBI:57597"/>
    </ligand>
</feature>
<feature type="binding site" evidence="1">
    <location>
        <position position="140"/>
    </location>
    <ligand>
        <name>sn-glycerol 3-phosphate</name>
        <dbReference type="ChEBI" id="CHEBI:57597"/>
    </ligand>
</feature>
<feature type="binding site" evidence="1">
    <location>
        <position position="142"/>
    </location>
    <ligand>
        <name>NADPH</name>
        <dbReference type="ChEBI" id="CHEBI:57783"/>
    </ligand>
</feature>
<feature type="binding site" evidence="1">
    <location>
        <position position="194"/>
    </location>
    <ligand>
        <name>sn-glycerol 3-phosphate</name>
        <dbReference type="ChEBI" id="CHEBI:57597"/>
    </ligand>
</feature>
<feature type="binding site" evidence="1">
    <location>
        <position position="247"/>
    </location>
    <ligand>
        <name>sn-glycerol 3-phosphate</name>
        <dbReference type="ChEBI" id="CHEBI:57597"/>
    </ligand>
</feature>
<feature type="binding site" evidence="1">
    <location>
        <position position="257"/>
    </location>
    <ligand>
        <name>sn-glycerol 3-phosphate</name>
        <dbReference type="ChEBI" id="CHEBI:57597"/>
    </ligand>
</feature>
<feature type="binding site" evidence="1">
    <location>
        <position position="258"/>
    </location>
    <ligand>
        <name>NADPH</name>
        <dbReference type="ChEBI" id="CHEBI:57783"/>
    </ligand>
</feature>
<feature type="binding site" evidence="1">
    <location>
        <position position="258"/>
    </location>
    <ligand>
        <name>sn-glycerol 3-phosphate</name>
        <dbReference type="ChEBI" id="CHEBI:57597"/>
    </ligand>
</feature>
<feature type="binding site" evidence="1">
    <location>
        <position position="259"/>
    </location>
    <ligand>
        <name>sn-glycerol 3-phosphate</name>
        <dbReference type="ChEBI" id="CHEBI:57597"/>
    </ligand>
</feature>
<feature type="binding site" evidence="1">
    <location>
        <position position="282"/>
    </location>
    <ligand>
        <name>NADPH</name>
        <dbReference type="ChEBI" id="CHEBI:57783"/>
    </ligand>
</feature>
<feature type="binding site" evidence="1">
    <location>
        <position position="284"/>
    </location>
    <ligand>
        <name>NADPH</name>
        <dbReference type="ChEBI" id="CHEBI:57783"/>
    </ligand>
</feature>
<gene>
    <name evidence="1" type="primary">gpsA</name>
    <name type="ordered locus">plu4838</name>
</gene>
<accession>Q7MY54</accession>
<protein>
    <recommendedName>
        <fullName evidence="1">Glycerol-3-phosphate dehydrogenase [NAD(P)+]</fullName>
        <ecNumber evidence="1">1.1.1.94</ecNumber>
    </recommendedName>
    <alternativeName>
        <fullName evidence="1">NAD(P)(+)-dependent glycerol-3-phosphate dehydrogenase</fullName>
    </alternativeName>
    <alternativeName>
        <fullName evidence="1">NAD(P)H-dependent dihydroxyacetone-phosphate reductase</fullName>
    </alternativeName>
</protein>
<name>GPDA_PHOLL</name>
<evidence type="ECO:0000255" key="1">
    <source>
        <dbReference type="HAMAP-Rule" id="MF_00394"/>
    </source>
</evidence>
<keyword id="KW-0963">Cytoplasm</keyword>
<keyword id="KW-0444">Lipid biosynthesis</keyword>
<keyword id="KW-0443">Lipid metabolism</keyword>
<keyword id="KW-0520">NAD</keyword>
<keyword id="KW-0521">NADP</keyword>
<keyword id="KW-0547">Nucleotide-binding</keyword>
<keyword id="KW-0560">Oxidoreductase</keyword>
<keyword id="KW-0594">Phospholipid biosynthesis</keyword>
<keyword id="KW-1208">Phospholipid metabolism</keyword>
<keyword id="KW-1185">Reference proteome</keyword>